<organism>
    <name type="scientific">Aromatoleum aromaticum (strain DSM 19018 / LMG 30748 / EbN1)</name>
    <name type="common">Azoarcus sp. (strain EbN1)</name>
    <dbReference type="NCBI Taxonomy" id="76114"/>
    <lineage>
        <taxon>Bacteria</taxon>
        <taxon>Pseudomonadati</taxon>
        <taxon>Pseudomonadota</taxon>
        <taxon>Betaproteobacteria</taxon>
        <taxon>Rhodocyclales</taxon>
        <taxon>Rhodocyclaceae</taxon>
        <taxon>Aromatoleum</taxon>
    </lineage>
</organism>
<sequence length="225" mass="24703">MAGKLDRLQRSLGHRFDNPALLEQALTHRSFGQPNNERLEFLGDSILNCVVAIALFERFASLREGEMSRLRASLVCQDGLHRVALELDLGEYLRLGEGEMKSGGFRRPSILADALEAVFAATFLDQGFAAAKAVIDRLYDPMIAAIDPGVAAKDPKTALQELLQGRKLPLPTYVMAKVHGEAHAQEFEVVCEVNALNLRTTGRGTNRRAAEQQAAELALAQLRKP</sequence>
<reference key="1">
    <citation type="journal article" date="2005" name="Arch. Microbiol.">
        <title>The genome sequence of an anaerobic aromatic-degrading denitrifying bacterium, strain EbN1.</title>
        <authorList>
            <person name="Rabus R."/>
            <person name="Kube M."/>
            <person name="Heider J."/>
            <person name="Beck A."/>
            <person name="Heitmann K."/>
            <person name="Widdel F."/>
            <person name="Reinhardt R."/>
        </authorList>
    </citation>
    <scope>NUCLEOTIDE SEQUENCE [LARGE SCALE GENOMIC DNA]</scope>
    <source>
        <strain>DSM 19018 / LMG 30748 / EbN1</strain>
    </source>
</reference>
<keyword id="KW-0963">Cytoplasm</keyword>
<keyword id="KW-0255">Endonuclease</keyword>
<keyword id="KW-0378">Hydrolase</keyword>
<keyword id="KW-0460">Magnesium</keyword>
<keyword id="KW-0479">Metal-binding</keyword>
<keyword id="KW-0507">mRNA processing</keyword>
<keyword id="KW-0540">Nuclease</keyword>
<keyword id="KW-1185">Reference proteome</keyword>
<keyword id="KW-0694">RNA-binding</keyword>
<keyword id="KW-0698">rRNA processing</keyword>
<keyword id="KW-0699">rRNA-binding</keyword>
<keyword id="KW-0819">tRNA processing</keyword>
<accession>Q5P086</accession>
<evidence type="ECO:0000255" key="1">
    <source>
        <dbReference type="HAMAP-Rule" id="MF_00104"/>
    </source>
</evidence>
<name>RNC_AROAE</name>
<proteinExistence type="inferred from homology"/>
<dbReference type="EC" id="3.1.26.3" evidence="1"/>
<dbReference type="EMBL" id="CR555306">
    <property type="protein sequence ID" value="CAI09278.1"/>
    <property type="molecule type" value="Genomic_DNA"/>
</dbReference>
<dbReference type="RefSeq" id="WP_011238948.1">
    <property type="nucleotide sequence ID" value="NC_006513.1"/>
</dbReference>
<dbReference type="SMR" id="Q5P086"/>
<dbReference type="STRING" id="76114.ebA5539"/>
<dbReference type="KEGG" id="eba:ebA5539"/>
<dbReference type="eggNOG" id="COG0571">
    <property type="taxonomic scope" value="Bacteria"/>
</dbReference>
<dbReference type="HOGENOM" id="CLU_000907_1_1_4"/>
<dbReference type="OrthoDB" id="9805026at2"/>
<dbReference type="Proteomes" id="UP000006552">
    <property type="component" value="Chromosome"/>
</dbReference>
<dbReference type="GO" id="GO:0005737">
    <property type="term" value="C:cytoplasm"/>
    <property type="evidence" value="ECO:0007669"/>
    <property type="project" value="UniProtKB-SubCell"/>
</dbReference>
<dbReference type="GO" id="GO:0003725">
    <property type="term" value="F:double-stranded RNA binding"/>
    <property type="evidence" value="ECO:0007669"/>
    <property type="project" value="TreeGrafter"/>
</dbReference>
<dbReference type="GO" id="GO:0046872">
    <property type="term" value="F:metal ion binding"/>
    <property type="evidence" value="ECO:0007669"/>
    <property type="project" value="UniProtKB-KW"/>
</dbReference>
<dbReference type="GO" id="GO:0004525">
    <property type="term" value="F:ribonuclease III activity"/>
    <property type="evidence" value="ECO:0007669"/>
    <property type="project" value="UniProtKB-UniRule"/>
</dbReference>
<dbReference type="GO" id="GO:0019843">
    <property type="term" value="F:rRNA binding"/>
    <property type="evidence" value="ECO:0007669"/>
    <property type="project" value="UniProtKB-KW"/>
</dbReference>
<dbReference type="GO" id="GO:0006397">
    <property type="term" value="P:mRNA processing"/>
    <property type="evidence" value="ECO:0007669"/>
    <property type="project" value="UniProtKB-UniRule"/>
</dbReference>
<dbReference type="GO" id="GO:0010468">
    <property type="term" value="P:regulation of gene expression"/>
    <property type="evidence" value="ECO:0007669"/>
    <property type="project" value="TreeGrafter"/>
</dbReference>
<dbReference type="GO" id="GO:0006364">
    <property type="term" value="P:rRNA processing"/>
    <property type="evidence" value="ECO:0007669"/>
    <property type="project" value="UniProtKB-UniRule"/>
</dbReference>
<dbReference type="GO" id="GO:0008033">
    <property type="term" value="P:tRNA processing"/>
    <property type="evidence" value="ECO:0007669"/>
    <property type="project" value="UniProtKB-KW"/>
</dbReference>
<dbReference type="CDD" id="cd10845">
    <property type="entry name" value="DSRM_RNAse_III_family"/>
    <property type="match status" value="1"/>
</dbReference>
<dbReference type="CDD" id="cd00593">
    <property type="entry name" value="RIBOc"/>
    <property type="match status" value="1"/>
</dbReference>
<dbReference type="FunFam" id="1.10.1520.10:FF:000001">
    <property type="entry name" value="Ribonuclease 3"/>
    <property type="match status" value="1"/>
</dbReference>
<dbReference type="FunFam" id="3.30.160.20:FF:000003">
    <property type="entry name" value="Ribonuclease 3"/>
    <property type="match status" value="1"/>
</dbReference>
<dbReference type="Gene3D" id="3.30.160.20">
    <property type="match status" value="1"/>
</dbReference>
<dbReference type="Gene3D" id="1.10.1520.10">
    <property type="entry name" value="Ribonuclease III domain"/>
    <property type="match status" value="1"/>
</dbReference>
<dbReference type="HAMAP" id="MF_00104">
    <property type="entry name" value="RNase_III"/>
    <property type="match status" value="1"/>
</dbReference>
<dbReference type="InterPro" id="IPR014720">
    <property type="entry name" value="dsRBD_dom"/>
</dbReference>
<dbReference type="InterPro" id="IPR011907">
    <property type="entry name" value="RNase_III"/>
</dbReference>
<dbReference type="InterPro" id="IPR000999">
    <property type="entry name" value="RNase_III_dom"/>
</dbReference>
<dbReference type="InterPro" id="IPR036389">
    <property type="entry name" value="RNase_III_sf"/>
</dbReference>
<dbReference type="NCBIfam" id="TIGR02191">
    <property type="entry name" value="RNaseIII"/>
    <property type="match status" value="1"/>
</dbReference>
<dbReference type="PANTHER" id="PTHR11207:SF0">
    <property type="entry name" value="RIBONUCLEASE 3"/>
    <property type="match status" value="1"/>
</dbReference>
<dbReference type="PANTHER" id="PTHR11207">
    <property type="entry name" value="RIBONUCLEASE III"/>
    <property type="match status" value="1"/>
</dbReference>
<dbReference type="Pfam" id="PF00035">
    <property type="entry name" value="dsrm"/>
    <property type="match status" value="1"/>
</dbReference>
<dbReference type="Pfam" id="PF14622">
    <property type="entry name" value="Ribonucleas_3_3"/>
    <property type="match status" value="1"/>
</dbReference>
<dbReference type="SMART" id="SM00358">
    <property type="entry name" value="DSRM"/>
    <property type="match status" value="1"/>
</dbReference>
<dbReference type="SMART" id="SM00535">
    <property type="entry name" value="RIBOc"/>
    <property type="match status" value="1"/>
</dbReference>
<dbReference type="SUPFAM" id="SSF54768">
    <property type="entry name" value="dsRNA-binding domain-like"/>
    <property type="match status" value="1"/>
</dbReference>
<dbReference type="SUPFAM" id="SSF69065">
    <property type="entry name" value="RNase III domain-like"/>
    <property type="match status" value="1"/>
</dbReference>
<dbReference type="PROSITE" id="PS50137">
    <property type="entry name" value="DS_RBD"/>
    <property type="match status" value="1"/>
</dbReference>
<dbReference type="PROSITE" id="PS00517">
    <property type="entry name" value="RNASE_3_1"/>
    <property type="match status" value="1"/>
</dbReference>
<dbReference type="PROSITE" id="PS50142">
    <property type="entry name" value="RNASE_3_2"/>
    <property type="match status" value="1"/>
</dbReference>
<gene>
    <name evidence="1" type="primary">rnc</name>
    <name type="ordered locus">AZOSEA31530</name>
    <name type="ORF">ebA5539</name>
</gene>
<feature type="chain" id="PRO_0000228490" description="Ribonuclease 3">
    <location>
        <begin position="1"/>
        <end position="225"/>
    </location>
</feature>
<feature type="domain" description="RNase III" evidence="1">
    <location>
        <begin position="5"/>
        <end position="127"/>
    </location>
</feature>
<feature type="domain" description="DRBM" evidence="1">
    <location>
        <begin position="154"/>
        <end position="224"/>
    </location>
</feature>
<feature type="active site" evidence="1">
    <location>
        <position position="44"/>
    </location>
</feature>
<feature type="active site" evidence="1">
    <location>
        <position position="116"/>
    </location>
</feature>
<feature type="binding site" evidence="1">
    <location>
        <position position="40"/>
    </location>
    <ligand>
        <name>Mg(2+)</name>
        <dbReference type="ChEBI" id="CHEBI:18420"/>
    </ligand>
</feature>
<feature type="binding site" evidence="1">
    <location>
        <position position="113"/>
    </location>
    <ligand>
        <name>Mg(2+)</name>
        <dbReference type="ChEBI" id="CHEBI:18420"/>
    </ligand>
</feature>
<feature type="binding site" evidence="1">
    <location>
        <position position="116"/>
    </location>
    <ligand>
        <name>Mg(2+)</name>
        <dbReference type="ChEBI" id="CHEBI:18420"/>
    </ligand>
</feature>
<comment type="function">
    <text evidence="1">Digests double-stranded RNA. Involved in the processing of primary rRNA transcript to yield the immediate precursors to the large and small rRNAs (23S and 16S). Processes some mRNAs, and tRNAs when they are encoded in the rRNA operon. Processes pre-crRNA and tracrRNA of type II CRISPR loci if present in the organism.</text>
</comment>
<comment type="catalytic activity">
    <reaction evidence="1">
        <text>Endonucleolytic cleavage to 5'-phosphomonoester.</text>
        <dbReference type="EC" id="3.1.26.3"/>
    </reaction>
</comment>
<comment type="cofactor">
    <cofactor evidence="1">
        <name>Mg(2+)</name>
        <dbReference type="ChEBI" id="CHEBI:18420"/>
    </cofactor>
</comment>
<comment type="subunit">
    <text evidence="1">Homodimer.</text>
</comment>
<comment type="subcellular location">
    <subcellularLocation>
        <location evidence="1">Cytoplasm</location>
    </subcellularLocation>
</comment>
<comment type="similarity">
    <text evidence="1">Belongs to the ribonuclease III family.</text>
</comment>
<protein>
    <recommendedName>
        <fullName evidence="1">Ribonuclease 3</fullName>
        <ecNumber evidence="1">3.1.26.3</ecNumber>
    </recommendedName>
    <alternativeName>
        <fullName evidence="1">Ribonuclease III</fullName>
        <shortName evidence="1">RNase III</shortName>
    </alternativeName>
</protein>